<evidence type="ECO:0000255" key="1">
    <source>
        <dbReference type="HAMAP-Rule" id="MF_01824"/>
    </source>
</evidence>
<organism>
    <name type="scientific">Bacillus cereus (strain G9842)</name>
    <dbReference type="NCBI Taxonomy" id="405531"/>
    <lineage>
        <taxon>Bacteria</taxon>
        <taxon>Bacillati</taxon>
        <taxon>Bacillota</taxon>
        <taxon>Bacilli</taxon>
        <taxon>Bacillales</taxon>
        <taxon>Bacillaceae</taxon>
        <taxon>Bacillus</taxon>
        <taxon>Bacillus cereus group</taxon>
    </lineage>
</organism>
<reference key="1">
    <citation type="submission" date="2008-10" db="EMBL/GenBank/DDBJ databases">
        <title>Genome sequence of Bacillus cereus G9842.</title>
        <authorList>
            <person name="Dodson R.J."/>
            <person name="Durkin A.S."/>
            <person name="Rosovitz M.J."/>
            <person name="Rasko D.A."/>
            <person name="Hoffmaster A."/>
            <person name="Ravel J."/>
            <person name="Sutton G."/>
        </authorList>
    </citation>
    <scope>NUCLEOTIDE SEQUENCE [LARGE SCALE GENOMIC DNA]</scope>
    <source>
        <strain>G9842</strain>
    </source>
</reference>
<proteinExistence type="inferred from homology"/>
<gene>
    <name evidence="1" type="primary">pdxS</name>
    <name type="ordered locus">BCG9842_B5304</name>
</gene>
<protein>
    <recommendedName>
        <fullName evidence="1">Pyridoxal 5'-phosphate synthase subunit PdxS</fullName>
        <shortName evidence="1">PLP synthase subunit PdxS</shortName>
        <ecNumber evidence="1">4.3.3.6</ecNumber>
    </recommendedName>
    <alternativeName>
        <fullName evidence="1">Pdx1</fullName>
    </alternativeName>
</protein>
<sequence>MTNVTGTERVKRGMAEMQKGGVIMDVINAEQAKIAEEAGAVAVMALERVPADIRAAGGVSRMADPTIVEEVMGAVSIPVMAKCRIGHLVEARVLESLGVDYIDESEVLTPADEVYHLNKRDYTVPFVCGCRDIGEAARRIAEGASMLRTKGEPGTGNIVEAVRHMRQVNAEIRQVASLREDELMTYAKNTGAPYEVLLEIKRLGRLPVVNFAAGGVATPADAALMMQLGADGVFVGSGIFKSENPERFARAIVEATTHYEDYELIASLSKGLGNAMKGIEISTLLPEQRMQERGW</sequence>
<comment type="function">
    <text evidence="1">Catalyzes the formation of pyridoxal 5'-phosphate from ribose 5-phosphate (RBP), glyceraldehyde 3-phosphate (G3P) and ammonia. The ammonia is provided by the PdxT subunit. Can also use ribulose 5-phosphate and dihydroxyacetone phosphate as substrates, resulting from enzyme-catalyzed isomerization of RBP and G3P, respectively.</text>
</comment>
<comment type="catalytic activity">
    <reaction evidence="1">
        <text>aldehydo-D-ribose 5-phosphate + D-glyceraldehyde 3-phosphate + L-glutamine = pyridoxal 5'-phosphate + L-glutamate + phosphate + 3 H2O + H(+)</text>
        <dbReference type="Rhea" id="RHEA:31507"/>
        <dbReference type="ChEBI" id="CHEBI:15377"/>
        <dbReference type="ChEBI" id="CHEBI:15378"/>
        <dbReference type="ChEBI" id="CHEBI:29985"/>
        <dbReference type="ChEBI" id="CHEBI:43474"/>
        <dbReference type="ChEBI" id="CHEBI:58273"/>
        <dbReference type="ChEBI" id="CHEBI:58359"/>
        <dbReference type="ChEBI" id="CHEBI:59776"/>
        <dbReference type="ChEBI" id="CHEBI:597326"/>
        <dbReference type="EC" id="4.3.3.6"/>
    </reaction>
</comment>
<comment type="pathway">
    <text evidence="1">Cofactor biosynthesis; pyridoxal 5'-phosphate biosynthesis.</text>
</comment>
<comment type="subunit">
    <text evidence="1">In the presence of PdxT, forms a dodecamer of heterodimers.</text>
</comment>
<comment type="similarity">
    <text evidence="1">Belongs to the PdxS/SNZ family.</text>
</comment>
<feature type="chain" id="PRO_1000188207" description="Pyridoxal 5'-phosphate synthase subunit PdxS">
    <location>
        <begin position="1"/>
        <end position="295"/>
    </location>
</feature>
<feature type="active site" description="Schiff-base intermediate with D-ribose 5-phosphate" evidence="1">
    <location>
        <position position="82"/>
    </location>
</feature>
<feature type="binding site" evidence="1">
    <location>
        <position position="25"/>
    </location>
    <ligand>
        <name>D-ribose 5-phosphate</name>
        <dbReference type="ChEBI" id="CHEBI:78346"/>
    </ligand>
</feature>
<feature type="binding site" evidence="1">
    <location>
        <position position="154"/>
    </location>
    <ligand>
        <name>D-ribose 5-phosphate</name>
        <dbReference type="ChEBI" id="CHEBI:78346"/>
    </ligand>
</feature>
<feature type="binding site" evidence="1">
    <location>
        <position position="166"/>
    </location>
    <ligand>
        <name>D-glyceraldehyde 3-phosphate</name>
        <dbReference type="ChEBI" id="CHEBI:59776"/>
    </ligand>
</feature>
<feature type="binding site" evidence="1">
    <location>
        <position position="215"/>
    </location>
    <ligand>
        <name>D-ribose 5-phosphate</name>
        <dbReference type="ChEBI" id="CHEBI:78346"/>
    </ligand>
</feature>
<feature type="binding site" evidence="1">
    <location>
        <begin position="236"/>
        <end position="237"/>
    </location>
    <ligand>
        <name>D-ribose 5-phosphate</name>
        <dbReference type="ChEBI" id="CHEBI:78346"/>
    </ligand>
</feature>
<accession>B7IS29</accession>
<name>PDXS_BACC2</name>
<keyword id="KW-0456">Lyase</keyword>
<keyword id="KW-0663">Pyridoxal phosphate</keyword>
<keyword id="KW-0704">Schiff base</keyword>
<dbReference type="EC" id="4.3.3.6" evidence="1"/>
<dbReference type="EMBL" id="CP001186">
    <property type="protein sequence ID" value="ACK93518.1"/>
    <property type="molecule type" value="Genomic_DNA"/>
</dbReference>
<dbReference type="RefSeq" id="WP_000186158.1">
    <property type="nucleotide sequence ID" value="NC_011772.1"/>
</dbReference>
<dbReference type="SMR" id="B7IS29"/>
<dbReference type="KEGG" id="bcg:BCG9842_B5304"/>
<dbReference type="HOGENOM" id="CLU_055352_1_0_9"/>
<dbReference type="UniPathway" id="UPA00245"/>
<dbReference type="Proteomes" id="UP000006744">
    <property type="component" value="Chromosome"/>
</dbReference>
<dbReference type="GO" id="GO:0036381">
    <property type="term" value="F:pyridoxal 5'-phosphate synthase (glutamine hydrolysing) activity"/>
    <property type="evidence" value="ECO:0007669"/>
    <property type="project" value="UniProtKB-UniRule"/>
</dbReference>
<dbReference type="GO" id="GO:0006520">
    <property type="term" value="P:amino acid metabolic process"/>
    <property type="evidence" value="ECO:0007669"/>
    <property type="project" value="TreeGrafter"/>
</dbReference>
<dbReference type="GO" id="GO:0042823">
    <property type="term" value="P:pyridoxal phosphate biosynthetic process"/>
    <property type="evidence" value="ECO:0007669"/>
    <property type="project" value="UniProtKB-UniRule"/>
</dbReference>
<dbReference type="GO" id="GO:0008615">
    <property type="term" value="P:pyridoxine biosynthetic process"/>
    <property type="evidence" value="ECO:0007669"/>
    <property type="project" value="TreeGrafter"/>
</dbReference>
<dbReference type="CDD" id="cd04727">
    <property type="entry name" value="pdxS"/>
    <property type="match status" value="1"/>
</dbReference>
<dbReference type="FunFam" id="3.20.20.70:FF:000001">
    <property type="entry name" value="Pyridoxine biosynthesis protein PDX1"/>
    <property type="match status" value="1"/>
</dbReference>
<dbReference type="Gene3D" id="3.20.20.70">
    <property type="entry name" value="Aldolase class I"/>
    <property type="match status" value="1"/>
</dbReference>
<dbReference type="HAMAP" id="MF_01824">
    <property type="entry name" value="PdxS"/>
    <property type="match status" value="1"/>
</dbReference>
<dbReference type="InterPro" id="IPR013785">
    <property type="entry name" value="Aldolase_TIM"/>
</dbReference>
<dbReference type="InterPro" id="IPR001852">
    <property type="entry name" value="PdxS/SNZ"/>
</dbReference>
<dbReference type="InterPro" id="IPR033755">
    <property type="entry name" value="PdxS/SNZ_N"/>
</dbReference>
<dbReference type="InterPro" id="IPR011060">
    <property type="entry name" value="RibuloseP-bd_barrel"/>
</dbReference>
<dbReference type="NCBIfam" id="NF003215">
    <property type="entry name" value="PRK04180.1"/>
    <property type="match status" value="1"/>
</dbReference>
<dbReference type="NCBIfam" id="TIGR00343">
    <property type="entry name" value="pyridoxal 5'-phosphate synthase lyase subunit PdxS"/>
    <property type="match status" value="1"/>
</dbReference>
<dbReference type="PANTHER" id="PTHR31829">
    <property type="entry name" value="PYRIDOXAL 5'-PHOSPHATE SYNTHASE SUBUNIT SNZ1-RELATED"/>
    <property type="match status" value="1"/>
</dbReference>
<dbReference type="PANTHER" id="PTHR31829:SF0">
    <property type="entry name" value="PYRIDOXAL 5'-PHOSPHATE SYNTHASE SUBUNIT SNZ1-RELATED"/>
    <property type="match status" value="1"/>
</dbReference>
<dbReference type="Pfam" id="PF01680">
    <property type="entry name" value="SOR_SNZ"/>
    <property type="match status" value="1"/>
</dbReference>
<dbReference type="PIRSF" id="PIRSF029271">
    <property type="entry name" value="Pdx1"/>
    <property type="match status" value="1"/>
</dbReference>
<dbReference type="SUPFAM" id="SSF51366">
    <property type="entry name" value="Ribulose-phoshate binding barrel"/>
    <property type="match status" value="1"/>
</dbReference>
<dbReference type="PROSITE" id="PS01235">
    <property type="entry name" value="PDXS_SNZ_1"/>
    <property type="match status" value="1"/>
</dbReference>
<dbReference type="PROSITE" id="PS51129">
    <property type="entry name" value="PDXS_SNZ_2"/>
    <property type="match status" value="1"/>
</dbReference>